<protein>
    <recommendedName>
        <fullName evidence="1">Small ribosomal subunit protein uS19</fullName>
    </recommendedName>
    <alternativeName>
        <fullName evidence="2">30S ribosomal protein S19</fullName>
    </alternativeName>
</protein>
<keyword id="KW-1185">Reference proteome</keyword>
<keyword id="KW-0687">Ribonucleoprotein</keyword>
<keyword id="KW-0689">Ribosomal protein</keyword>
<keyword id="KW-0694">RNA-binding</keyword>
<keyword id="KW-0699">rRNA-binding</keyword>
<proteinExistence type="inferred from homology"/>
<feature type="chain" id="PRO_1000081764" description="Small ribosomal subunit protein uS19">
    <location>
        <begin position="1"/>
        <end position="95"/>
    </location>
</feature>
<name>RS19_CLOK5</name>
<reference key="1">
    <citation type="journal article" date="2008" name="Proc. Natl. Acad. Sci. U.S.A.">
        <title>The genome of Clostridium kluyveri, a strict anaerobe with unique metabolic features.</title>
        <authorList>
            <person name="Seedorf H."/>
            <person name="Fricke W.F."/>
            <person name="Veith B."/>
            <person name="Brueggemann H."/>
            <person name="Liesegang H."/>
            <person name="Strittmatter A."/>
            <person name="Miethke M."/>
            <person name="Buckel W."/>
            <person name="Hinderberger J."/>
            <person name="Li F."/>
            <person name="Hagemeier C."/>
            <person name="Thauer R.K."/>
            <person name="Gottschalk G."/>
        </authorList>
    </citation>
    <scope>NUCLEOTIDE SEQUENCE [LARGE SCALE GENOMIC DNA]</scope>
    <source>
        <strain>ATCC 8527 / DSM 555 / NBRC 12016 / NCIMB 10680 / K1</strain>
    </source>
</reference>
<organism>
    <name type="scientific">Clostridium kluyveri (strain ATCC 8527 / DSM 555 / NBRC 12016 / NCIMB 10680 / K1)</name>
    <dbReference type="NCBI Taxonomy" id="431943"/>
    <lineage>
        <taxon>Bacteria</taxon>
        <taxon>Bacillati</taxon>
        <taxon>Bacillota</taxon>
        <taxon>Clostridia</taxon>
        <taxon>Eubacteriales</taxon>
        <taxon>Clostridiaceae</taxon>
        <taxon>Clostridium</taxon>
    </lineage>
</organism>
<sequence length="95" mass="10906">MSRSVKKGPYVQESLLKKINELNKKGEKKVIKTWSRSSTIFPQMIGHTIAVHDGRKHVPVYISEDMVGHKLGEFALTRTYRGHVNKTEKTTRVSR</sequence>
<dbReference type="EMBL" id="CP000673">
    <property type="protein sequence ID" value="EDK32282.1"/>
    <property type="molecule type" value="Genomic_DNA"/>
</dbReference>
<dbReference type="RefSeq" id="WP_011988807.1">
    <property type="nucleotide sequence ID" value="NC_009706.1"/>
</dbReference>
<dbReference type="SMR" id="A5N4Q1"/>
<dbReference type="STRING" id="431943.CKL_0228"/>
<dbReference type="KEGG" id="ckl:CKL_0228"/>
<dbReference type="eggNOG" id="COG0185">
    <property type="taxonomic scope" value="Bacteria"/>
</dbReference>
<dbReference type="HOGENOM" id="CLU_144911_0_1_9"/>
<dbReference type="Proteomes" id="UP000002411">
    <property type="component" value="Chromosome"/>
</dbReference>
<dbReference type="GO" id="GO:0005737">
    <property type="term" value="C:cytoplasm"/>
    <property type="evidence" value="ECO:0007669"/>
    <property type="project" value="UniProtKB-ARBA"/>
</dbReference>
<dbReference type="GO" id="GO:0015935">
    <property type="term" value="C:small ribosomal subunit"/>
    <property type="evidence" value="ECO:0007669"/>
    <property type="project" value="InterPro"/>
</dbReference>
<dbReference type="GO" id="GO:0019843">
    <property type="term" value="F:rRNA binding"/>
    <property type="evidence" value="ECO:0007669"/>
    <property type="project" value="UniProtKB-UniRule"/>
</dbReference>
<dbReference type="GO" id="GO:0003735">
    <property type="term" value="F:structural constituent of ribosome"/>
    <property type="evidence" value="ECO:0007669"/>
    <property type="project" value="InterPro"/>
</dbReference>
<dbReference type="GO" id="GO:0000028">
    <property type="term" value="P:ribosomal small subunit assembly"/>
    <property type="evidence" value="ECO:0007669"/>
    <property type="project" value="TreeGrafter"/>
</dbReference>
<dbReference type="GO" id="GO:0006412">
    <property type="term" value="P:translation"/>
    <property type="evidence" value="ECO:0007669"/>
    <property type="project" value="UniProtKB-UniRule"/>
</dbReference>
<dbReference type="FunFam" id="3.30.860.10:FF:000001">
    <property type="entry name" value="30S ribosomal protein S19"/>
    <property type="match status" value="1"/>
</dbReference>
<dbReference type="Gene3D" id="3.30.860.10">
    <property type="entry name" value="30s Ribosomal Protein S19, Chain A"/>
    <property type="match status" value="1"/>
</dbReference>
<dbReference type="HAMAP" id="MF_00531">
    <property type="entry name" value="Ribosomal_uS19"/>
    <property type="match status" value="1"/>
</dbReference>
<dbReference type="InterPro" id="IPR002222">
    <property type="entry name" value="Ribosomal_uS19"/>
</dbReference>
<dbReference type="InterPro" id="IPR005732">
    <property type="entry name" value="Ribosomal_uS19_bac-type"/>
</dbReference>
<dbReference type="InterPro" id="IPR020934">
    <property type="entry name" value="Ribosomal_uS19_CS"/>
</dbReference>
<dbReference type="InterPro" id="IPR023575">
    <property type="entry name" value="Ribosomal_uS19_SF"/>
</dbReference>
<dbReference type="NCBIfam" id="TIGR01050">
    <property type="entry name" value="rpsS_bact"/>
    <property type="match status" value="1"/>
</dbReference>
<dbReference type="PANTHER" id="PTHR11880">
    <property type="entry name" value="RIBOSOMAL PROTEIN S19P FAMILY MEMBER"/>
    <property type="match status" value="1"/>
</dbReference>
<dbReference type="PANTHER" id="PTHR11880:SF8">
    <property type="entry name" value="SMALL RIBOSOMAL SUBUNIT PROTEIN US19M"/>
    <property type="match status" value="1"/>
</dbReference>
<dbReference type="Pfam" id="PF00203">
    <property type="entry name" value="Ribosomal_S19"/>
    <property type="match status" value="1"/>
</dbReference>
<dbReference type="PIRSF" id="PIRSF002144">
    <property type="entry name" value="Ribosomal_S19"/>
    <property type="match status" value="1"/>
</dbReference>
<dbReference type="PRINTS" id="PR00975">
    <property type="entry name" value="RIBOSOMALS19"/>
</dbReference>
<dbReference type="SUPFAM" id="SSF54570">
    <property type="entry name" value="Ribosomal protein S19"/>
    <property type="match status" value="1"/>
</dbReference>
<dbReference type="PROSITE" id="PS00323">
    <property type="entry name" value="RIBOSOMAL_S19"/>
    <property type="match status" value="1"/>
</dbReference>
<accession>A5N4Q1</accession>
<comment type="function">
    <text evidence="1">Protein S19 forms a complex with S13 that binds strongly to the 16S ribosomal RNA.</text>
</comment>
<comment type="similarity">
    <text evidence="1">Belongs to the universal ribosomal protein uS19 family.</text>
</comment>
<evidence type="ECO:0000255" key="1">
    <source>
        <dbReference type="HAMAP-Rule" id="MF_00531"/>
    </source>
</evidence>
<evidence type="ECO:0000305" key="2"/>
<gene>
    <name evidence="1" type="primary">rpsS</name>
    <name type="ordered locus">CKL_0228</name>
</gene>